<dbReference type="EC" id="1.1.1.86" evidence="1"/>
<dbReference type="EMBL" id="CP001635">
    <property type="protein sequence ID" value="ACS18998.1"/>
    <property type="molecule type" value="Genomic_DNA"/>
</dbReference>
<dbReference type="SMR" id="C5CYN9"/>
<dbReference type="STRING" id="543728.Vapar_2371"/>
<dbReference type="KEGG" id="vap:Vapar_2371"/>
<dbReference type="eggNOG" id="COG0059">
    <property type="taxonomic scope" value="Bacteria"/>
</dbReference>
<dbReference type="HOGENOM" id="CLU_033821_0_1_4"/>
<dbReference type="OrthoDB" id="9804088at2"/>
<dbReference type="UniPathway" id="UPA00047">
    <property type="reaction ID" value="UER00056"/>
</dbReference>
<dbReference type="UniPathway" id="UPA00049">
    <property type="reaction ID" value="UER00060"/>
</dbReference>
<dbReference type="GO" id="GO:0005829">
    <property type="term" value="C:cytosol"/>
    <property type="evidence" value="ECO:0007669"/>
    <property type="project" value="TreeGrafter"/>
</dbReference>
<dbReference type="GO" id="GO:0004455">
    <property type="term" value="F:ketol-acid reductoisomerase activity"/>
    <property type="evidence" value="ECO:0007669"/>
    <property type="project" value="UniProtKB-UniRule"/>
</dbReference>
<dbReference type="GO" id="GO:0000287">
    <property type="term" value="F:magnesium ion binding"/>
    <property type="evidence" value="ECO:0007669"/>
    <property type="project" value="UniProtKB-UniRule"/>
</dbReference>
<dbReference type="GO" id="GO:0050661">
    <property type="term" value="F:NADP binding"/>
    <property type="evidence" value="ECO:0007669"/>
    <property type="project" value="InterPro"/>
</dbReference>
<dbReference type="GO" id="GO:0009097">
    <property type="term" value="P:isoleucine biosynthetic process"/>
    <property type="evidence" value="ECO:0007669"/>
    <property type="project" value="UniProtKB-UniRule"/>
</dbReference>
<dbReference type="GO" id="GO:0009099">
    <property type="term" value="P:L-valine biosynthetic process"/>
    <property type="evidence" value="ECO:0007669"/>
    <property type="project" value="UniProtKB-UniRule"/>
</dbReference>
<dbReference type="FunFam" id="3.40.50.720:FF:000023">
    <property type="entry name" value="Ketol-acid reductoisomerase (NADP(+))"/>
    <property type="match status" value="1"/>
</dbReference>
<dbReference type="Gene3D" id="6.10.240.10">
    <property type="match status" value="1"/>
</dbReference>
<dbReference type="Gene3D" id="3.40.50.720">
    <property type="entry name" value="NAD(P)-binding Rossmann-like Domain"/>
    <property type="match status" value="1"/>
</dbReference>
<dbReference type="HAMAP" id="MF_00435">
    <property type="entry name" value="IlvC"/>
    <property type="match status" value="1"/>
</dbReference>
<dbReference type="InterPro" id="IPR008927">
    <property type="entry name" value="6-PGluconate_DH-like_C_sf"/>
</dbReference>
<dbReference type="InterPro" id="IPR013023">
    <property type="entry name" value="KARI"/>
</dbReference>
<dbReference type="InterPro" id="IPR000506">
    <property type="entry name" value="KARI_C"/>
</dbReference>
<dbReference type="InterPro" id="IPR013116">
    <property type="entry name" value="KARI_N"/>
</dbReference>
<dbReference type="InterPro" id="IPR014359">
    <property type="entry name" value="KARI_prok"/>
</dbReference>
<dbReference type="InterPro" id="IPR036291">
    <property type="entry name" value="NAD(P)-bd_dom_sf"/>
</dbReference>
<dbReference type="NCBIfam" id="TIGR00465">
    <property type="entry name" value="ilvC"/>
    <property type="match status" value="1"/>
</dbReference>
<dbReference type="NCBIfam" id="NF004017">
    <property type="entry name" value="PRK05479.1"/>
    <property type="match status" value="1"/>
</dbReference>
<dbReference type="NCBIfam" id="NF009940">
    <property type="entry name" value="PRK13403.1"/>
    <property type="match status" value="1"/>
</dbReference>
<dbReference type="PANTHER" id="PTHR21371">
    <property type="entry name" value="KETOL-ACID REDUCTOISOMERASE, MITOCHONDRIAL"/>
    <property type="match status" value="1"/>
</dbReference>
<dbReference type="PANTHER" id="PTHR21371:SF1">
    <property type="entry name" value="KETOL-ACID REDUCTOISOMERASE, MITOCHONDRIAL"/>
    <property type="match status" value="1"/>
</dbReference>
<dbReference type="Pfam" id="PF01450">
    <property type="entry name" value="KARI_C"/>
    <property type="match status" value="1"/>
</dbReference>
<dbReference type="Pfam" id="PF07991">
    <property type="entry name" value="KARI_N"/>
    <property type="match status" value="1"/>
</dbReference>
<dbReference type="PIRSF" id="PIRSF000116">
    <property type="entry name" value="IlvC_gammaproteo"/>
    <property type="match status" value="1"/>
</dbReference>
<dbReference type="SUPFAM" id="SSF48179">
    <property type="entry name" value="6-phosphogluconate dehydrogenase C-terminal domain-like"/>
    <property type="match status" value="1"/>
</dbReference>
<dbReference type="SUPFAM" id="SSF51735">
    <property type="entry name" value="NAD(P)-binding Rossmann-fold domains"/>
    <property type="match status" value="1"/>
</dbReference>
<dbReference type="PROSITE" id="PS51851">
    <property type="entry name" value="KARI_C"/>
    <property type="match status" value="1"/>
</dbReference>
<dbReference type="PROSITE" id="PS51850">
    <property type="entry name" value="KARI_N"/>
    <property type="match status" value="1"/>
</dbReference>
<feature type="chain" id="PRO_1000206096" description="Ketol-acid reductoisomerase (NADP(+))">
    <location>
        <begin position="1"/>
        <end position="338"/>
    </location>
</feature>
<feature type="domain" description="KARI N-terminal Rossmann" evidence="2">
    <location>
        <begin position="1"/>
        <end position="181"/>
    </location>
</feature>
<feature type="domain" description="KARI C-terminal knotted" evidence="3">
    <location>
        <begin position="182"/>
        <end position="327"/>
    </location>
</feature>
<feature type="active site" evidence="1">
    <location>
        <position position="107"/>
    </location>
</feature>
<feature type="binding site" evidence="1">
    <location>
        <begin position="24"/>
        <end position="27"/>
    </location>
    <ligand>
        <name>NADP(+)</name>
        <dbReference type="ChEBI" id="CHEBI:58349"/>
    </ligand>
</feature>
<feature type="binding site" evidence="1">
    <location>
        <position position="47"/>
    </location>
    <ligand>
        <name>NADP(+)</name>
        <dbReference type="ChEBI" id="CHEBI:58349"/>
    </ligand>
</feature>
<feature type="binding site" evidence="1">
    <location>
        <position position="52"/>
    </location>
    <ligand>
        <name>NADP(+)</name>
        <dbReference type="ChEBI" id="CHEBI:58349"/>
    </ligand>
</feature>
<feature type="binding site" evidence="1">
    <location>
        <position position="133"/>
    </location>
    <ligand>
        <name>NADP(+)</name>
        <dbReference type="ChEBI" id="CHEBI:58349"/>
    </ligand>
</feature>
<feature type="binding site" evidence="1">
    <location>
        <position position="190"/>
    </location>
    <ligand>
        <name>Mg(2+)</name>
        <dbReference type="ChEBI" id="CHEBI:18420"/>
        <label>1</label>
    </ligand>
</feature>
<feature type="binding site" evidence="1">
    <location>
        <position position="190"/>
    </location>
    <ligand>
        <name>Mg(2+)</name>
        <dbReference type="ChEBI" id="CHEBI:18420"/>
        <label>2</label>
    </ligand>
</feature>
<feature type="binding site" evidence="1">
    <location>
        <position position="194"/>
    </location>
    <ligand>
        <name>Mg(2+)</name>
        <dbReference type="ChEBI" id="CHEBI:18420"/>
        <label>1</label>
    </ligand>
</feature>
<feature type="binding site" evidence="1">
    <location>
        <position position="226"/>
    </location>
    <ligand>
        <name>Mg(2+)</name>
        <dbReference type="ChEBI" id="CHEBI:18420"/>
        <label>2</label>
    </ligand>
</feature>
<feature type="binding site" evidence="1">
    <location>
        <position position="230"/>
    </location>
    <ligand>
        <name>Mg(2+)</name>
        <dbReference type="ChEBI" id="CHEBI:18420"/>
        <label>2</label>
    </ligand>
</feature>
<feature type="binding site" evidence="1">
    <location>
        <position position="251"/>
    </location>
    <ligand>
        <name>substrate</name>
    </ligand>
</feature>
<comment type="function">
    <text evidence="1">Involved in the biosynthesis of branched-chain amino acids (BCAA). Catalyzes an alkyl-migration followed by a ketol-acid reduction of (S)-2-acetolactate (S2AL) to yield (R)-2,3-dihydroxy-isovalerate. In the isomerase reaction, S2AL is rearranged via a Mg-dependent methyl migration to produce 3-hydroxy-3-methyl-2-ketobutyrate (HMKB). In the reductase reaction, this 2-ketoacid undergoes a metal-dependent reduction by NADPH to yield (R)-2,3-dihydroxy-isovalerate.</text>
</comment>
<comment type="catalytic activity">
    <reaction evidence="1">
        <text>(2R)-2,3-dihydroxy-3-methylbutanoate + NADP(+) = (2S)-2-acetolactate + NADPH + H(+)</text>
        <dbReference type="Rhea" id="RHEA:22068"/>
        <dbReference type="ChEBI" id="CHEBI:15378"/>
        <dbReference type="ChEBI" id="CHEBI:49072"/>
        <dbReference type="ChEBI" id="CHEBI:57783"/>
        <dbReference type="ChEBI" id="CHEBI:58349"/>
        <dbReference type="ChEBI" id="CHEBI:58476"/>
        <dbReference type="EC" id="1.1.1.86"/>
    </reaction>
</comment>
<comment type="catalytic activity">
    <reaction evidence="1">
        <text>(2R,3R)-2,3-dihydroxy-3-methylpentanoate + NADP(+) = (S)-2-ethyl-2-hydroxy-3-oxobutanoate + NADPH + H(+)</text>
        <dbReference type="Rhea" id="RHEA:13493"/>
        <dbReference type="ChEBI" id="CHEBI:15378"/>
        <dbReference type="ChEBI" id="CHEBI:49256"/>
        <dbReference type="ChEBI" id="CHEBI:49258"/>
        <dbReference type="ChEBI" id="CHEBI:57783"/>
        <dbReference type="ChEBI" id="CHEBI:58349"/>
        <dbReference type="EC" id="1.1.1.86"/>
    </reaction>
</comment>
<comment type="cofactor">
    <cofactor evidence="1">
        <name>Mg(2+)</name>
        <dbReference type="ChEBI" id="CHEBI:18420"/>
    </cofactor>
    <text evidence="1">Binds 2 magnesium ions per subunit.</text>
</comment>
<comment type="pathway">
    <text evidence="1">Amino-acid biosynthesis; L-isoleucine biosynthesis; L-isoleucine from 2-oxobutanoate: step 2/4.</text>
</comment>
<comment type="pathway">
    <text evidence="1">Amino-acid biosynthesis; L-valine biosynthesis; L-valine from pyruvate: step 2/4.</text>
</comment>
<comment type="similarity">
    <text evidence="1">Belongs to the ketol-acid reductoisomerase family.</text>
</comment>
<sequence length="338" mass="36693">MKVYYDKDADLSLIKGKTVAIIGYGSQGHAHAQNLNDSGVKVVVGLRKGGASWPKVEKAGLKVAEVADAVKAADVVMILLPDEQIASVYKNDVAPNIKEGASLVFAHGFNVHYGFVQPRADLDVWMVAPKAPGHTVRSTYTQGGGVPHLVAVHQDKSGKARDLALSYATANGGGKAGIIETNFREETETDLFGEQAVLCGGTVELIKAGFETLVEAGYAPEMAYFECLHELKLIVDLIYEGGIANMNYSISNNAEYGEYVTGPRIVTEETKKVMKQVLKDIQTGEYAKSFVLENAAGAPTLISRRRLNSEHQIEVVGEKLRAMMPWIKKNKLVDQTRN</sequence>
<accession>C5CYN9</accession>
<protein>
    <recommendedName>
        <fullName evidence="1">Ketol-acid reductoisomerase (NADP(+))</fullName>
        <shortName evidence="1">KARI</shortName>
        <ecNumber evidence="1">1.1.1.86</ecNumber>
    </recommendedName>
    <alternativeName>
        <fullName evidence="1">Acetohydroxy-acid isomeroreductase</fullName>
        <shortName evidence="1">AHIR</shortName>
    </alternativeName>
    <alternativeName>
        <fullName evidence="1">Alpha-keto-beta-hydroxylacyl reductoisomerase</fullName>
    </alternativeName>
    <alternativeName>
        <fullName evidence="1">Ketol-acid reductoisomerase type 1</fullName>
    </alternativeName>
    <alternativeName>
        <fullName evidence="1">Ketol-acid reductoisomerase type I</fullName>
    </alternativeName>
</protein>
<proteinExistence type="inferred from homology"/>
<keyword id="KW-0028">Amino-acid biosynthesis</keyword>
<keyword id="KW-0100">Branched-chain amino acid biosynthesis</keyword>
<keyword id="KW-0460">Magnesium</keyword>
<keyword id="KW-0479">Metal-binding</keyword>
<keyword id="KW-0521">NADP</keyword>
<keyword id="KW-0560">Oxidoreductase</keyword>
<evidence type="ECO:0000255" key="1">
    <source>
        <dbReference type="HAMAP-Rule" id="MF_00435"/>
    </source>
</evidence>
<evidence type="ECO:0000255" key="2">
    <source>
        <dbReference type="PROSITE-ProRule" id="PRU01197"/>
    </source>
</evidence>
<evidence type="ECO:0000255" key="3">
    <source>
        <dbReference type="PROSITE-ProRule" id="PRU01198"/>
    </source>
</evidence>
<reference key="1">
    <citation type="journal article" date="2011" name="J. Bacteriol.">
        <title>Complete genome sequence of the metabolically versatile plant growth-promoting endophyte, Variovorax paradoxus S110.</title>
        <authorList>
            <person name="Han J.I."/>
            <person name="Choi H.K."/>
            <person name="Lee S.W."/>
            <person name="Orwin P.M."/>
            <person name="Kim J."/>
            <person name="Laroe S.L."/>
            <person name="Kim T.G."/>
            <person name="O'Neil J."/>
            <person name="Leadbetter J.R."/>
            <person name="Lee S.Y."/>
            <person name="Hur C.G."/>
            <person name="Spain J.C."/>
            <person name="Ovchinnikova G."/>
            <person name="Goodwin L."/>
            <person name="Han C."/>
        </authorList>
    </citation>
    <scope>NUCLEOTIDE SEQUENCE [LARGE SCALE GENOMIC DNA]</scope>
    <source>
        <strain>S110</strain>
    </source>
</reference>
<name>ILVC_VARPS</name>
<gene>
    <name evidence="1" type="primary">ilvC</name>
    <name type="ordered locus">Vapar_2371</name>
</gene>
<organism>
    <name type="scientific">Variovorax paradoxus (strain S110)</name>
    <dbReference type="NCBI Taxonomy" id="543728"/>
    <lineage>
        <taxon>Bacteria</taxon>
        <taxon>Pseudomonadati</taxon>
        <taxon>Pseudomonadota</taxon>
        <taxon>Betaproteobacteria</taxon>
        <taxon>Burkholderiales</taxon>
        <taxon>Comamonadaceae</taxon>
        <taxon>Variovorax</taxon>
    </lineage>
</organism>